<sequence length="253" mass="29305">MVSSFTSAPRSGFYYFAQGWKLVSQPGIRRFVILPLLVNILLMGGAFWWLFTQLDVWIPTLMSYVPDWLQWLSYLLWPLAVISVLLVFGYFFSTIANWIAAPFNGLLAEQLEARLTGATPPDTGIFGIMKDVPRIMKREWQKFAWYLPRAIVLLILYFIPGIGQTVAPVLWFLFSAWMLAIQYCDYPFDNHKVPFKEMRTALRTRKITNMQFGALTSLFTMIPLLNLFIMPVAVCGATAMWVDCYRDKHAMWR</sequence>
<organism>
    <name type="scientific">Shigella boydii serotype 18 (strain CDC 3083-94 / BS512)</name>
    <dbReference type="NCBI Taxonomy" id="344609"/>
    <lineage>
        <taxon>Bacteria</taxon>
        <taxon>Pseudomonadati</taxon>
        <taxon>Pseudomonadota</taxon>
        <taxon>Gammaproteobacteria</taxon>
        <taxon>Enterobacterales</taxon>
        <taxon>Enterobacteriaceae</taxon>
        <taxon>Shigella</taxon>
    </lineage>
</organism>
<feature type="chain" id="PRO_1000125505" description="Sulfate transporter CysZ">
    <location>
        <begin position="1"/>
        <end position="253"/>
    </location>
</feature>
<feature type="transmembrane region" description="Helical" evidence="1">
    <location>
        <begin position="31"/>
        <end position="51"/>
    </location>
</feature>
<feature type="transmembrane region" description="Helical" evidence="1">
    <location>
        <begin position="75"/>
        <end position="95"/>
    </location>
</feature>
<feature type="transmembrane region" description="Helical" evidence="1">
    <location>
        <begin position="151"/>
        <end position="171"/>
    </location>
</feature>
<feature type="transmembrane region" description="Helical" evidence="1">
    <location>
        <begin position="222"/>
        <end position="242"/>
    </location>
</feature>
<protein>
    <recommendedName>
        <fullName evidence="1">Sulfate transporter CysZ</fullName>
    </recommendedName>
</protein>
<comment type="function">
    <text evidence="1">High affinity, high specificity proton-dependent sulfate transporter, which mediates sulfate uptake. Provides the sulfur source for the cysteine synthesis pathway.</text>
</comment>
<comment type="subcellular location">
    <subcellularLocation>
        <location evidence="1">Cell inner membrane</location>
        <topology evidence="1">Multi-pass membrane protein</topology>
    </subcellularLocation>
</comment>
<comment type="similarity">
    <text evidence="1">Belongs to the CysZ family.</text>
</comment>
<name>CYSZ_SHIB3</name>
<reference key="1">
    <citation type="submission" date="2008-05" db="EMBL/GenBank/DDBJ databases">
        <title>Complete sequence of Shigella boydii serotype 18 strain BS512.</title>
        <authorList>
            <person name="Rasko D.A."/>
            <person name="Rosovitz M."/>
            <person name="Maurelli A.T."/>
            <person name="Myers G."/>
            <person name="Seshadri R."/>
            <person name="Cer R."/>
            <person name="Jiang L."/>
            <person name="Ravel J."/>
            <person name="Sebastian Y."/>
        </authorList>
    </citation>
    <scope>NUCLEOTIDE SEQUENCE [LARGE SCALE GENOMIC DNA]</scope>
    <source>
        <strain>CDC 3083-94 / BS512</strain>
    </source>
</reference>
<proteinExistence type="inferred from homology"/>
<dbReference type="EMBL" id="CP001063">
    <property type="protein sequence ID" value="ACD08844.1"/>
    <property type="molecule type" value="Genomic_DNA"/>
</dbReference>
<dbReference type="RefSeq" id="WP_000254839.1">
    <property type="nucleotide sequence ID" value="NC_010658.1"/>
</dbReference>
<dbReference type="SMR" id="B2TWZ5"/>
<dbReference type="STRING" id="344609.SbBS512_E2767"/>
<dbReference type="GeneID" id="93774718"/>
<dbReference type="KEGG" id="sbc:SbBS512_E2767"/>
<dbReference type="HOGENOM" id="CLU_070331_1_0_6"/>
<dbReference type="Proteomes" id="UP000001030">
    <property type="component" value="Chromosome"/>
</dbReference>
<dbReference type="GO" id="GO:0005886">
    <property type="term" value="C:plasma membrane"/>
    <property type="evidence" value="ECO:0007669"/>
    <property type="project" value="UniProtKB-SubCell"/>
</dbReference>
<dbReference type="GO" id="GO:0009675">
    <property type="term" value="F:high-affinity sulfate:proton symporter activity"/>
    <property type="evidence" value="ECO:0007669"/>
    <property type="project" value="TreeGrafter"/>
</dbReference>
<dbReference type="GO" id="GO:0019344">
    <property type="term" value="P:cysteine biosynthetic process"/>
    <property type="evidence" value="ECO:0007669"/>
    <property type="project" value="UniProtKB-UniRule"/>
</dbReference>
<dbReference type="GO" id="GO:0000103">
    <property type="term" value="P:sulfate assimilation"/>
    <property type="evidence" value="ECO:0007669"/>
    <property type="project" value="InterPro"/>
</dbReference>
<dbReference type="HAMAP" id="MF_00468">
    <property type="entry name" value="CysZ"/>
    <property type="match status" value="1"/>
</dbReference>
<dbReference type="InterPro" id="IPR050480">
    <property type="entry name" value="CysZ_sulfate_transptr"/>
</dbReference>
<dbReference type="InterPro" id="IPR022985">
    <property type="entry name" value="Sulfate_CysZ"/>
</dbReference>
<dbReference type="NCBIfam" id="NF003433">
    <property type="entry name" value="PRK04949.1"/>
    <property type="match status" value="1"/>
</dbReference>
<dbReference type="PANTHER" id="PTHR37468">
    <property type="entry name" value="SULFATE TRANSPORTER CYSZ"/>
    <property type="match status" value="1"/>
</dbReference>
<dbReference type="PANTHER" id="PTHR37468:SF1">
    <property type="entry name" value="SULFATE TRANSPORTER CYSZ"/>
    <property type="match status" value="1"/>
</dbReference>
<dbReference type="Pfam" id="PF07264">
    <property type="entry name" value="EI24"/>
    <property type="match status" value="1"/>
</dbReference>
<accession>B2TWZ5</accession>
<evidence type="ECO:0000255" key="1">
    <source>
        <dbReference type="HAMAP-Rule" id="MF_00468"/>
    </source>
</evidence>
<gene>
    <name evidence="1" type="primary">cysZ</name>
    <name type="ordered locus">SbBS512_E2767</name>
</gene>
<keyword id="KW-0028">Amino-acid biosynthesis</keyword>
<keyword id="KW-0997">Cell inner membrane</keyword>
<keyword id="KW-1003">Cell membrane</keyword>
<keyword id="KW-0198">Cysteine biosynthesis</keyword>
<keyword id="KW-0472">Membrane</keyword>
<keyword id="KW-1185">Reference proteome</keyword>
<keyword id="KW-0764">Sulfate transport</keyword>
<keyword id="KW-0812">Transmembrane</keyword>
<keyword id="KW-1133">Transmembrane helix</keyword>
<keyword id="KW-0813">Transport</keyword>